<protein>
    <recommendedName>
        <fullName>4-nitrophenol 2-monooxygenase, oxygenase component</fullName>
        <ecNumber>1.14.13.29</ecNumber>
    </recommendedName>
    <alternativeName>
        <fullName>4-nitrophenol hydroxylase</fullName>
        <shortName>4-NP hydroxylase</shortName>
    </alternativeName>
    <alternativeName>
        <fullName>Two-component 4-nitrophenol hydroxylase</fullName>
    </alternativeName>
</protein>
<keyword id="KW-0274">FAD</keyword>
<keyword id="KW-0285">Flavoprotein</keyword>
<keyword id="KW-0520">NAD</keyword>
<keyword id="KW-0560">Oxidoreductase</keyword>
<feature type="chain" id="PRO_0000418987" description="4-nitrophenol 2-monooxygenase, oxygenase component">
    <location>
        <begin position="1"/>
        <end position="519"/>
    </location>
</feature>
<comment type="function">
    <text evidence="1 2">Utilizes the flavins supplied by NphA2 to catalyze the degradation of 4-nitrophenol (4-NP) via 4-nitrocatechol (4-NC) which is used as the sole carbon, nitrogen, and energy source. Can also degrade phenol and 4-chlorophenol as rapidly as 4-NP.</text>
</comment>
<comment type="catalytic activity">
    <reaction evidence="2">
        <text>4-nitrophenol + NADH + O2 + H(+) = 4-nitrocatechol + NAD(+) + H2O</text>
        <dbReference type="Rhea" id="RHEA:12568"/>
        <dbReference type="ChEBI" id="CHEBI:15377"/>
        <dbReference type="ChEBI" id="CHEBI:15378"/>
        <dbReference type="ChEBI" id="CHEBI:15379"/>
        <dbReference type="ChEBI" id="CHEBI:57540"/>
        <dbReference type="ChEBI" id="CHEBI:57730"/>
        <dbReference type="ChEBI" id="CHEBI:57917"/>
        <dbReference type="ChEBI" id="CHEBI:57945"/>
        <dbReference type="EC" id="1.14.13.29"/>
    </reaction>
</comment>
<comment type="cofactor">
    <cofactor evidence="2">
        <name>FAD</name>
        <dbReference type="ChEBI" id="CHEBI:57692"/>
    </cofactor>
</comment>
<comment type="activity regulation">
    <text evidence="2">Partially inhibited by concentrations of FAD above 10 uM and completely inhibited by concentrations above 50 uM.</text>
</comment>
<comment type="biophysicochemical properties">
    <phDependence>
        <text evidence="2">Optimum pH is 8.</text>
    </phDependence>
</comment>
<comment type="subunit">
    <text evidence="2">Homotetramer. 4-nitrophenol 2-monooxygenase complex consists of an oxygenase component NphA1 and a flavin reductase component NphA2.</text>
</comment>
<comment type="induction">
    <text evidence="2">By 4-NP in the presence of NphR.</text>
</comment>
<comment type="similarity">
    <text evidence="3">Belongs to the FADH(2)-utilizing monooxygenase family.</text>
</comment>
<proteinExistence type="evidence at protein level"/>
<reference key="1">
    <citation type="journal article" date="2003" name="J. Biosci. Bioeng.">
        <title>Cloning and characterization of a 4-nitrophenol hydroxylase gene cluster from Rhodococcus sp. PN1.</title>
        <authorList>
            <person name="Takeo M."/>
            <person name="Yasukawa T."/>
            <person name="Abe Y."/>
            <person name="Niihara S."/>
            <person name="Maeda Y."/>
            <person name="Negoro S."/>
        </authorList>
    </citation>
    <scope>NUCLEOTIDE SEQUENCE [GENOMIC DNA]</scope>
    <scope>FUNCTION IN THE DEGRADATION OF 4-NITROPHENOL</scope>
    <source>
        <strain>PN1</strain>
    </source>
</reference>
<reference key="2">
    <citation type="journal article" date="2008" name="J. Bacteriol.">
        <title>Mechanism of 4-nitrophenol oxidation in Rhodococcus sp. Strain PN1: characterization of the two-component 4-nitrophenol hydroxylase and regulation of its expression.</title>
        <authorList>
            <person name="Takeo M."/>
            <person name="Murakami M."/>
            <person name="Niihara S."/>
            <person name="Yamamoto K."/>
            <person name="Nishimura M."/>
            <person name="Kato D."/>
            <person name="Negoro S."/>
        </authorList>
    </citation>
    <scope>NUCLEOTIDE SEQUENCE [GENOMIC DNA]</scope>
    <scope>FUNCTION AS A 4-NITROPHENOL 2-MONOOXYGENASE</scope>
    <scope>CATALYTIC ACTIVITY</scope>
    <scope>BIOPHYSICOCHEMICAL PROPERTIES</scope>
    <scope>SUBSTRATE SPECIFICITY</scope>
    <scope>COFACTOR</scope>
    <scope>ACTIVITY REGULATION</scope>
    <scope>INDUCTION</scope>
    <scope>SUBUNIT</scope>
    <source>
        <strain>PN1</strain>
    </source>
</reference>
<name>NPHA1_RHOSO</name>
<sequence length="519" mass="58038">MTTSAFVDDRVGVPNDVRPMTGDEYLESLRDGREVYFRGERVDDVTTHPAFRNSARSVARMYDALHQPEQEGVLAVPTDTGNGGFTHPFFKTARSADDLVLSRDAIVAWQREVYGWLGRSPDYKASFLGTLGANADFYGPYRDNALRWYKHAQERMLYLNHAIVNPPIDRDKPADETADVCVHVVEETDAGLIVSGAKVVATGSAITNANFIAHYGLLRKKEYGLIFTVPMDSPGLKLFCRTSYEMNAAVMGTPFDYPLSSRFDENDAIMVFDRVLVPWENVFAYDTDTANGFVMKSGFLSRFMFHGCARLAVKLDFIAGCVMKGVEMTGSAGFRGVQMQIGEILNWRDMFWGLSDAMAKSPEQWVNGAVQPNLNYGLAYRTFMGVGYPRVKEIIQQVLGSGLIYLNSHASDWANPAMRPYLDQYVRGSNGVAAIDRVQLLKLLWDAVGTEFGGRHELYERNYGGDHEAVRFQTLFAYQATGQDLALKGFAEQCMSEYDVDGWTRPDLIGNDDLRIVRG</sequence>
<gene>
    <name type="primary">nphA1</name>
</gene>
<dbReference type="EC" id="1.14.13.29"/>
<dbReference type="EMBL" id="AB081773">
    <property type="protein sequence ID" value="BAB86378.2"/>
    <property type="molecule type" value="Genomic_DNA"/>
</dbReference>
<dbReference type="SMR" id="Q8RQQ0"/>
<dbReference type="BioCyc" id="MetaCyc:MONOMER-13017"/>
<dbReference type="BRENDA" id="1.14.13.29">
    <property type="organism ID" value="10870"/>
</dbReference>
<dbReference type="GO" id="GO:0018601">
    <property type="term" value="F:4-nitrophenol 2-monooxygenase activity"/>
    <property type="evidence" value="ECO:0000314"/>
    <property type="project" value="UniProtKB"/>
</dbReference>
<dbReference type="GO" id="GO:0016627">
    <property type="term" value="F:oxidoreductase activity, acting on the CH-CH group of donors"/>
    <property type="evidence" value="ECO:0007669"/>
    <property type="project" value="InterPro"/>
</dbReference>
<dbReference type="GO" id="GO:0046196">
    <property type="term" value="P:4-nitrophenol catabolic process"/>
    <property type="evidence" value="ECO:0000314"/>
    <property type="project" value="UniProtKB"/>
</dbReference>
<dbReference type="FunFam" id="1.10.3140.10:FF:000001">
    <property type="entry name" value="4-hydroxyphenylacetate 3-monooxygenase oxygenase component"/>
    <property type="match status" value="1"/>
</dbReference>
<dbReference type="FunFam" id="1.20.140.10:FF:000044">
    <property type="entry name" value="4-hydroxyphenylacetate 3-monooxygenase oxygenase component"/>
    <property type="match status" value="1"/>
</dbReference>
<dbReference type="FunFam" id="2.40.110.10:FF:000026">
    <property type="entry name" value="4-hydroxyphenylacetate 3-monooxygenase oxygenase component"/>
    <property type="match status" value="1"/>
</dbReference>
<dbReference type="Gene3D" id="1.10.3140.10">
    <property type="entry name" value="4-hydroxybutyryl-coa dehydratase, domain 1"/>
    <property type="match status" value="1"/>
</dbReference>
<dbReference type="Gene3D" id="2.40.110.10">
    <property type="entry name" value="Butyryl-CoA Dehydrogenase, subunit A, domain 2"/>
    <property type="match status" value="1"/>
</dbReference>
<dbReference type="Gene3D" id="1.20.140.10">
    <property type="entry name" value="Butyryl-CoA Dehydrogenase, subunit A, domain 3"/>
    <property type="match status" value="1"/>
</dbReference>
<dbReference type="InterPro" id="IPR046373">
    <property type="entry name" value="Acyl-CoA_Oxase/DH_mid-dom_sf"/>
</dbReference>
<dbReference type="InterPro" id="IPR036250">
    <property type="entry name" value="AcylCo_DH-like_C"/>
</dbReference>
<dbReference type="InterPro" id="IPR009100">
    <property type="entry name" value="AcylCoA_DH/oxidase_NM_dom_sf"/>
</dbReference>
<dbReference type="InterPro" id="IPR024677">
    <property type="entry name" value="HpaB/PvcC"/>
</dbReference>
<dbReference type="InterPro" id="IPR004925">
    <property type="entry name" value="HpaB/PvcC/4-BUDH"/>
</dbReference>
<dbReference type="InterPro" id="IPR024719">
    <property type="entry name" value="HpaB/PvcC/4-BUDH_C"/>
</dbReference>
<dbReference type="InterPro" id="IPR024674">
    <property type="entry name" value="HpaB/PvcC/4-BUDH_N"/>
</dbReference>
<dbReference type="PANTHER" id="PTHR36117">
    <property type="entry name" value="4-HYDROXYPHENYLACETATE 3-MONOOXYGENASE-RELATED"/>
    <property type="match status" value="1"/>
</dbReference>
<dbReference type="PANTHER" id="PTHR36117:SF3">
    <property type="entry name" value="4-HYDROXYPHENYLACETATE 3-MONOOXYGENASE-RELATED"/>
    <property type="match status" value="1"/>
</dbReference>
<dbReference type="Pfam" id="PF03241">
    <property type="entry name" value="HpaB"/>
    <property type="match status" value="1"/>
</dbReference>
<dbReference type="Pfam" id="PF11794">
    <property type="entry name" value="HpaB_N"/>
    <property type="match status" value="1"/>
</dbReference>
<dbReference type="PIRSF" id="PIRSF500125">
    <property type="entry name" value="4_HPA_large"/>
    <property type="match status" value="1"/>
</dbReference>
<dbReference type="PIRSF" id="PIRSF000331">
    <property type="entry name" value="HpaA_HpaB"/>
    <property type="match status" value="1"/>
</dbReference>
<dbReference type="SUPFAM" id="SSF47203">
    <property type="entry name" value="Acyl-CoA dehydrogenase C-terminal domain-like"/>
    <property type="match status" value="1"/>
</dbReference>
<dbReference type="SUPFAM" id="SSF56645">
    <property type="entry name" value="Acyl-CoA dehydrogenase NM domain-like"/>
    <property type="match status" value="1"/>
</dbReference>
<organism>
    <name type="scientific">Rhodococcus sp</name>
    <dbReference type="NCBI Taxonomy" id="1831"/>
    <lineage>
        <taxon>Bacteria</taxon>
        <taxon>Bacillati</taxon>
        <taxon>Actinomycetota</taxon>
        <taxon>Actinomycetes</taxon>
        <taxon>Mycobacteriales</taxon>
        <taxon>Nocardiaceae</taxon>
        <taxon>Rhodococcus</taxon>
    </lineage>
</organism>
<evidence type="ECO:0000269" key="1">
    <source>
    </source>
</evidence>
<evidence type="ECO:0000269" key="2">
    <source>
    </source>
</evidence>
<evidence type="ECO:0000305" key="3"/>
<accession>Q8RQQ0</accession>